<comment type="function">
    <text evidence="1">Channel that opens in response to stretch forces in the membrane lipid bilayer. May participate in the regulation of osmotic pressure changes within the cell.</text>
</comment>
<comment type="subunit">
    <text evidence="1">Homopentamer.</text>
</comment>
<comment type="subcellular location">
    <subcellularLocation>
        <location evidence="1">Cell membrane</location>
        <topology evidence="1">Multi-pass membrane protein</topology>
    </subcellularLocation>
</comment>
<comment type="similarity">
    <text evidence="1">Belongs to the MscL family.</text>
</comment>
<name>MSCL_LEUCK</name>
<keyword id="KW-1003">Cell membrane</keyword>
<keyword id="KW-0407">Ion channel</keyword>
<keyword id="KW-0406">Ion transport</keyword>
<keyword id="KW-0472">Membrane</keyword>
<keyword id="KW-1185">Reference proteome</keyword>
<keyword id="KW-0812">Transmembrane</keyword>
<keyword id="KW-1133">Transmembrane helix</keyword>
<keyword id="KW-0813">Transport</keyword>
<feature type="chain" id="PRO_1000094903" description="Large-conductance mechanosensitive channel">
    <location>
        <begin position="1"/>
        <end position="126"/>
    </location>
</feature>
<feature type="transmembrane region" description="Helical" evidence="1">
    <location>
        <begin position="14"/>
        <end position="34"/>
    </location>
</feature>
<feature type="transmembrane region" description="Helical" evidence="1">
    <location>
        <begin position="69"/>
        <end position="89"/>
    </location>
</feature>
<organism>
    <name type="scientific">Leuconostoc citreum (strain KM20)</name>
    <dbReference type="NCBI Taxonomy" id="349519"/>
    <lineage>
        <taxon>Bacteria</taxon>
        <taxon>Bacillati</taxon>
        <taxon>Bacillota</taxon>
        <taxon>Bacilli</taxon>
        <taxon>Lactobacillales</taxon>
        <taxon>Lactobacillaceae</taxon>
        <taxon>Leuconostoc</taxon>
    </lineage>
</organism>
<gene>
    <name evidence="1" type="primary">mscL</name>
    <name type="ordered locus">LCK_01226</name>
</gene>
<accession>B1MZU9</accession>
<reference key="1">
    <citation type="journal article" date="2008" name="J. Bacteriol.">
        <title>Complete genome sequence of Leuconostoc citreum KM20.</title>
        <authorList>
            <person name="Kim J.F."/>
            <person name="Jeong H."/>
            <person name="Lee J.-S."/>
            <person name="Choi S.-H."/>
            <person name="Ha M."/>
            <person name="Hur C.-G."/>
            <person name="Kim J.-S."/>
            <person name="Lee S."/>
            <person name="Park H.-S."/>
            <person name="Park Y.-H."/>
            <person name="Oh T.K."/>
        </authorList>
    </citation>
    <scope>NUCLEOTIDE SEQUENCE [LARGE SCALE GENOMIC DNA]</scope>
    <source>
        <strain>KM20</strain>
    </source>
</reference>
<sequence>MLSEFKTFIMRGNVLDLAVGVIIGGAFTGIVKSLTNNLISPIITFFTGGTSDLQNLKLVVTKELTFKYGAFLNDVINFLITAFVVFLLVKFVNRILRTNKKEEVKANPELEVLAEIRDLLEAQKKA</sequence>
<dbReference type="EMBL" id="DQ489736">
    <property type="protein sequence ID" value="ACA83051.1"/>
    <property type="molecule type" value="Genomic_DNA"/>
</dbReference>
<dbReference type="RefSeq" id="WP_004901876.1">
    <property type="nucleotide sequence ID" value="NC_010471.1"/>
</dbReference>
<dbReference type="SMR" id="B1MZU9"/>
<dbReference type="STRING" id="349519.LCK_01226"/>
<dbReference type="TCDB" id="1.A.22.1.8">
    <property type="family name" value="the large conductance mechanosensitive ion channel (mscl) family"/>
</dbReference>
<dbReference type="GeneID" id="61101761"/>
<dbReference type="KEGG" id="lci:LCK_01226"/>
<dbReference type="eggNOG" id="COG1970">
    <property type="taxonomic scope" value="Bacteria"/>
</dbReference>
<dbReference type="HOGENOM" id="CLU_095787_0_0_9"/>
<dbReference type="OrthoDB" id="9810350at2"/>
<dbReference type="Proteomes" id="UP000002166">
    <property type="component" value="Chromosome"/>
</dbReference>
<dbReference type="GO" id="GO:0005886">
    <property type="term" value="C:plasma membrane"/>
    <property type="evidence" value="ECO:0007669"/>
    <property type="project" value="UniProtKB-SubCell"/>
</dbReference>
<dbReference type="GO" id="GO:0008381">
    <property type="term" value="F:mechanosensitive monoatomic ion channel activity"/>
    <property type="evidence" value="ECO:0007669"/>
    <property type="project" value="UniProtKB-UniRule"/>
</dbReference>
<dbReference type="Gene3D" id="1.10.1200.120">
    <property type="entry name" value="Large-conductance mechanosensitive channel, MscL, domain 1"/>
    <property type="match status" value="1"/>
</dbReference>
<dbReference type="HAMAP" id="MF_00115">
    <property type="entry name" value="MscL"/>
    <property type="match status" value="1"/>
</dbReference>
<dbReference type="InterPro" id="IPR019823">
    <property type="entry name" value="Mechanosensitive_channel_CS"/>
</dbReference>
<dbReference type="InterPro" id="IPR001185">
    <property type="entry name" value="MS_channel"/>
</dbReference>
<dbReference type="InterPro" id="IPR037673">
    <property type="entry name" value="MSC/AndL"/>
</dbReference>
<dbReference type="InterPro" id="IPR036019">
    <property type="entry name" value="MscL_channel"/>
</dbReference>
<dbReference type="NCBIfam" id="TIGR00220">
    <property type="entry name" value="mscL"/>
    <property type="match status" value="1"/>
</dbReference>
<dbReference type="NCBIfam" id="NF001842">
    <property type="entry name" value="PRK00567.1-3"/>
    <property type="match status" value="1"/>
</dbReference>
<dbReference type="PANTHER" id="PTHR30266:SF2">
    <property type="entry name" value="LARGE-CONDUCTANCE MECHANOSENSITIVE CHANNEL"/>
    <property type="match status" value="1"/>
</dbReference>
<dbReference type="PANTHER" id="PTHR30266">
    <property type="entry name" value="MECHANOSENSITIVE CHANNEL MSCL"/>
    <property type="match status" value="1"/>
</dbReference>
<dbReference type="Pfam" id="PF01741">
    <property type="entry name" value="MscL"/>
    <property type="match status" value="1"/>
</dbReference>
<dbReference type="PRINTS" id="PR01264">
    <property type="entry name" value="MECHCHANNEL"/>
</dbReference>
<dbReference type="SUPFAM" id="SSF81330">
    <property type="entry name" value="Gated mechanosensitive channel"/>
    <property type="match status" value="1"/>
</dbReference>
<dbReference type="PROSITE" id="PS01327">
    <property type="entry name" value="MSCL"/>
    <property type="match status" value="1"/>
</dbReference>
<evidence type="ECO:0000255" key="1">
    <source>
        <dbReference type="HAMAP-Rule" id="MF_00115"/>
    </source>
</evidence>
<protein>
    <recommendedName>
        <fullName evidence="1">Large-conductance mechanosensitive channel</fullName>
    </recommendedName>
</protein>
<proteinExistence type="inferred from homology"/>